<protein>
    <recommendedName>
        <fullName evidence="1">Ribosome-recycling factor</fullName>
        <shortName evidence="1">RRF</shortName>
    </recommendedName>
    <alternativeName>
        <fullName evidence="1">Ribosome-releasing factor</fullName>
    </alternativeName>
</protein>
<dbReference type="EMBL" id="CP000964">
    <property type="protein sequence ID" value="ACI09483.1"/>
    <property type="molecule type" value="Genomic_DNA"/>
</dbReference>
<dbReference type="SMR" id="B5Y1J9"/>
<dbReference type="KEGG" id="kpe:KPK_4548"/>
<dbReference type="HOGENOM" id="CLU_073981_2_1_6"/>
<dbReference type="Proteomes" id="UP000001734">
    <property type="component" value="Chromosome"/>
</dbReference>
<dbReference type="GO" id="GO:0005829">
    <property type="term" value="C:cytosol"/>
    <property type="evidence" value="ECO:0007669"/>
    <property type="project" value="GOC"/>
</dbReference>
<dbReference type="GO" id="GO:0043023">
    <property type="term" value="F:ribosomal large subunit binding"/>
    <property type="evidence" value="ECO:0007669"/>
    <property type="project" value="TreeGrafter"/>
</dbReference>
<dbReference type="GO" id="GO:0002184">
    <property type="term" value="P:cytoplasmic translational termination"/>
    <property type="evidence" value="ECO:0007669"/>
    <property type="project" value="TreeGrafter"/>
</dbReference>
<dbReference type="CDD" id="cd00520">
    <property type="entry name" value="RRF"/>
    <property type="match status" value="1"/>
</dbReference>
<dbReference type="FunFam" id="1.10.132.20:FF:000001">
    <property type="entry name" value="Ribosome-recycling factor"/>
    <property type="match status" value="1"/>
</dbReference>
<dbReference type="FunFam" id="3.30.1360.40:FF:000001">
    <property type="entry name" value="Ribosome-recycling factor"/>
    <property type="match status" value="1"/>
</dbReference>
<dbReference type="Gene3D" id="3.30.1360.40">
    <property type="match status" value="1"/>
</dbReference>
<dbReference type="Gene3D" id="1.10.132.20">
    <property type="entry name" value="Ribosome-recycling factor"/>
    <property type="match status" value="1"/>
</dbReference>
<dbReference type="HAMAP" id="MF_00040">
    <property type="entry name" value="RRF"/>
    <property type="match status" value="1"/>
</dbReference>
<dbReference type="InterPro" id="IPR002661">
    <property type="entry name" value="Ribosome_recyc_fac"/>
</dbReference>
<dbReference type="InterPro" id="IPR023584">
    <property type="entry name" value="Ribosome_recyc_fac_dom"/>
</dbReference>
<dbReference type="InterPro" id="IPR036191">
    <property type="entry name" value="RRF_sf"/>
</dbReference>
<dbReference type="NCBIfam" id="TIGR00496">
    <property type="entry name" value="frr"/>
    <property type="match status" value="1"/>
</dbReference>
<dbReference type="PANTHER" id="PTHR20982:SF3">
    <property type="entry name" value="MITOCHONDRIAL RIBOSOME RECYCLING FACTOR PSEUDO 1"/>
    <property type="match status" value="1"/>
</dbReference>
<dbReference type="PANTHER" id="PTHR20982">
    <property type="entry name" value="RIBOSOME RECYCLING FACTOR"/>
    <property type="match status" value="1"/>
</dbReference>
<dbReference type="Pfam" id="PF01765">
    <property type="entry name" value="RRF"/>
    <property type="match status" value="1"/>
</dbReference>
<dbReference type="SUPFAM" id="SSF55194">
    <property type="entry name" value="Ribosome recycling factor, RRF"/>
    <property type="match status" value="1"/>
</dbReference>
<name>RRF_KLEP3</name>
<reference key="1">
    <citation type="journal article" date="2008" name="PLoS Genet.">
        <title>Complete genome sequence of the N2-fixing broad host range endophyte Klebsiella pneumoniae 342 and virulence predictions verified in mice.</title>
        <authorList>
            <person name="Fouts D.E."/>
            <person name="Tyler H.L."/>
            <person name="DeBoy R.T."/>
            <person name="Daugherty S."/>
            <person name="Ren Q."/>
            <person name="Badger J.H."/>
            <person name="Durkin A.S."/>
            <person name="Huot H."/>
            <person name="Shrivastava S."/>
            <person name="Kothari S."/>
            <person name="Dodson R.J."/>
            <person name="Mohamoud Y."/>
            <person name="Khouri H."/>
            <person name="Roesch L.F.W."/>
            <person name="Krogfelt K.A."/>
            <person name="Struve C."/>
            <person name="Triplett E.W."/>
            <person name="Methe B.A."/>
        </authorList>
    </citation>
    <scope>NUCLEOTIDE SEQUENCE [LARGE SCALE GENOMIC DNA]</scope>
    <source>
        <strain>342</strain>
    </source>
</reference>
<sequence>MISDIRKDAEIRMEKCVEAFKNQISKIRTGRASPSLLDGIVVEYYGTPTPLRQLASVTVEDSRTLKINVFDRSMSAAVEKAIMASDLGLNPSSAGSDIRVPLPPLTEERRKDLTKIVRGEAEQARVAVRNVRRDANDKVKALLKEKEISEDDDRRSQDDVQKMTDAAIKKVDAALADKEAELMQF</sequence>
<accession>B5Y1J9</accession>
<gene>
    <name evidence="1" type="primary">frr</name>
    <name type="ordered locus">KPK_4548</name>
</gene>
<evidence type="ECO:0000255" key="1">
    <source>
        <dbReference type="HAMAP-Rule" id="MF_00040"/>
    </source>
</evidence>
<keyword id="KW-0963">Cytoplasm</keyword>
<keyword id="KW-0648">Protein biosynthesis</keyword>
<comment type="function">
    <text evidence="1">Responsible for the release of ribosomes from messenger RNA at the termination of protein biosynthesis. May increase the efficiency of translation by recycling ribosomes from one round of translation to another.</text>
</comment>
<comment type="subcellular location">
    <subcellularLocation>
        <location evidence="1">Cytoplasm</location>
    </subcellularLocation>
</comment>
<comment type="similarity">
    <text evidence="1">Belongs to the RRF family.</text>
</comment>
<feature type="chain" id="PRO_1000090751" description="Ribosome-recycling factor">
    <location>
        <begin position="1"/>
        <end position="185"/>
    </location>
</feature>
<organism>
    <name type="scientific">Klebsiella pneumoniae (strain 342)</name>
    <dbReference type="NCBI Taxonomy" id="507522"/>
    <lineage>
        <taxon>Bacteria</taxon>
        <taxon>Pseudomonadati</taxon>
        <taxon>Pseudomonadota</taxon>
        <taxon>Gammaproteobacteria</taxon>
        <taxon>Enterobacterales</taxon>
        <taxon>Enterobacteriaceae</taxon>
        <taxon>Klebsiella/Raoultella group</taxon>
        <taxon>Klebsiella</taxon>
        <taxon>Klebsiella pneumoniae complex</taxon>
    </lineage>
</organism>
<proteinExistence type="inferred from homology"/>